<dbReference type="EMBL" id="AC001645">
    <property type="protein sequence ID" value="AAB63630.1"/>
    <property type="molecule type" value="Genomic_DNA"/>
</dbReference>
<dbReference type="EMBL" id="AP000373">
    <property type="protein sequence ID" value="BAB01146.1"/>
    <property type="molecule type" value="Genomic_DNA"/>
</dbReference>
<dbReference type="EMBL" id="CP002686">
    <property type="protein sequence ID" value="AEE75822.1"/>
    <property type="molecule type" value="Genomic_DNA"/>
</dbReference>
<dbReference type="EMBL" id="CP002686">
    <property type="protein sequence ID" value="AEE75824.1"/>
    <property type="molecule type" value="Genomic_DNA"/>
</dbReference>
<dbReference type="EMBL" id="AY059903">
    <property type="protein sequence ID" value="AAL24385.1"/>
    <property type="molecule type" value="mRNA"/>
</dbReference>
<dbReference type="EMBL" id="AY114681">
    <property type="protein sequence ID" value="AAM48000.1"/>
    <property type="molecule type" value="mRNA"/>
</dbReference>
<dbReference type="EMBL" id="AK221147">
    <property type="protein sequence ID" value="BAD95149.1"/>
    <property type="molecule type" value="mRNA"/>
</dbReference>
<dbReference type="RefSeq" id="NP_001189913.1">
    <molecule id="O04309-2"/>
    <property type="nucleotide sequence ID" value="NM_001202984.2"/>
</dbReference>
<dbReference type="RefSeq" id="NP_566547.2">
    <molecule id="O04309-1"/>
    <property type="nucleotide sequence ID" value="NM_112518.5"/>
</dbReference>
<dbReference type="SMR" id="O04309"/>
<dbReference type="BioGRID" id="6229">
    <property type="interactions" value="3"/>
</dbReference>
<dbReference type="FunCoup" id="O04309">
    <property type="interactions" value="11"/>
</dbReference>
<dbReference type="STRING" id="3702.O04309"/>
<dbReference type="PaxDb" id="3702-AT3G16470.2"/>
<dbReference type="ProteomicsDB" id="238973">
    <molecule id="O04309-1"/>
</dbReference>
<dbReference type="EnsemblPlants" id="AT3G16470.1">
    <molecule id="O04309-1"/>
    <property type="protein sequence ID" value="AT3G16470.1"/>
    <property type="gene ID" value="AT3G16470"/>
</dbReference>
<dbReference type="EnsemblPlants" id="AT3G16470.3">
    <molecule id="O04309-2"/>
    <property type="protein sequence ID" value="AT3G16470.3"/>
    <property type="gene ID" value="AT3G16470"/>
</dbReference>
<dbReference type="GeneID" id="820895"/>
<dbReference type="Gramene" id="AT3G16470.1">
    <molecule id="O04309-1"/>
    <property type="protein sequence ID" value="AT3G16470.1"/>
    <property type="gene ID" value="AT3G16470"/>
</dbReference>
<dbReference type="Gramene" id="AT3G16470.3">
    <molecule id="O04309-2"/>
    <property type="protein sequence ID" value="AT3G16470.3"/>
    <property type="gene ID" value="AT3G16470"/>
</dbReference>
<dbReference type="KEGG" id="ath:AT3G16470"/>
<dbReference type="Araport" id="AT3G16470"/>
<dbReference type="TAIR" id="AT3G16470">
    <property type="gene designation" value="JR1"/>
</dbReference>
<dbReference type="HOGENOM" id="CLU_041730_0_0_1"/>
<dbReference type="InParanoid" id="O04309"/>
<dbReference type="OMA" id="PYGMESG"/>
<dbReference type="PhylomeDB" id="O04309"/>
<dbReference type="PRO" id="PR:O04309"/>
<dbReference type="Proteomes" id="UP000006548">
    <property type="component" value="Chromosome 3"/>
</dbReference>
<dbReference type="ExpressionAtlas" id="O04309">
    <property type="expression patterns" value="baseline and differential"/>
</dbReference>
<dbReference type="GO" id="GO:0009507">
    <property type="term" value="C:chloroplast"/>
    <property type="evidence" value="ECO:0007005"/>
    <property type="project" value="TAIR"/>
</dbReference>
<dbReference type="GO" id="GO:0005829">
    <property type="term" value="C:cytosol"/>
    <property type="evidence" value="ECO:0007005"/>
    <property type="project" value="TAIR"/>
</dbReference>
<dbReference type="GO" id="GO:0005634">
    <property type="term" value="C:nucleus"/>
    <property type="evidence" value="ECO:0000314"/>
    <property type="project" value="TAIR"/>
</dbReference>
<dbReference type="GO" id="GO:0000325">
    <property type="term" value="C:plant-type vacuole"/>
    <property type="evidence" value="ECO:0007005"/>
    <property type="project" value="TAIR"/>
</dbReference>
<dbReference type="GO" id="GO:0009506">
    <property type="term" value="C:plasmodesma"/>
    <property type="evidence" value="ECO:0007005"/>
    <property type="project" value="TAIR"/>
</dbReference>
<dbReference type="GO" id="GO:0030246">
    <property type="term" value="F:carbohydrate binding"/>
    <property type="evidence" value="ECO:0000314"/>
    <property type="project" value="TAIR"/>
</dbReference>
<dbReference type="GO" id="GO:0009753">
    <property type="term" value="P:response to jasmonic acid"/>
    <property type="evidence" value="ECO:0000270"/>
    <property type="project" value="TAIR"/>
</dbReference>
<dbReference type="GO" id="GO:0009611">
    <property type="term" value="P:response to wounding"/>
    <property type="evidence" value="ECO:0000270"/>
    <property type="project" value="TAIR"/>
</dbReference>
<dbReference type="GO" id="GO:0010228">
    <property type="term" value="P:vegetative to reproductive phase transition of meristem"/>
    <property type="evidence" value="ECO:0000315"/>
    <property type="project" value="TAIR"/>
</dbReference>
<dbReference type="CDD" id="cd09612">
    <property type="entry name" value="Jacalin"/>
    <property type="match status" value="3"/>
</dbReference>
<dbReference type="FunFam" id="2.100.10.30:FF:000001">
    <property type="entry name" value="Jacalin-related lectin 33"/>
    <property type="match status" value="3"/>
</dbReference>
<dbReference type="Gene3D" id="2.100.10.30">
    <property type="entry name" value="Jacalin-like lectin domain"/>
    <property type="match status" value="3"/>
</dbReference>
<dbReference type="InterPro" id="IPR001229">
    <property type="entry name" value="Jacalin-like_lectin_dom"/>
</dbReference>
<dbReference type="InterPro" id="IPR033734">
    <property type="entry name" value="Jacalin-like_lectin_dom_plant"/>
</dbReference>
<dbReference type="InterPro" id="IPR036404">
    <property type="entry name" value="Jacalin-like_lectin_dom_sf"/>
</dbReference>
<dbReference type="PANTHER" id="PTHR47293">
    <property type="entry name" value="JACALIN-RELATED LECTIN 3"/>
    <property type="match status" value="1"/>
</dbReference>
<dbReference type="PANTHER" id="PTHR47293:SF64">
    <property type="entry name" value="JACALIN-RELATED LECTIN 35"/>
    <property type="match status" value="1"/>
</dbReference>
<dbReference type="Pfam" id="PF01419">
    <property type="entry name" value="Jacalin"/>
    <property type="match status" value="3"/>
</dbReference>
<dbReference type="SMART" id="SM00915">
    <property type="entry name" value="Jacalin"/>
    <property type="match status" value="3"/>
</dbReference>
<dbReference type="SUPFAM" id="SSF51101">
    <property type="entry name" value="Mannose-binding lectins"/>
    <property type="match status" value="3"/>
</dbReference>
<dbReference type="PROSITE" id="PS51752">
    <property type="entry name" value="JACALIN_LECTIN"/>
    <property type="match status" value="3"/>
</dbReference>
<protein>
    <recommendedName>
        <fullName>Jacalin-related lectin 35</fullName>
    </recommendedName>
    <alternativeName>
        <fullName>JA-responsive protein 1</fullName>
    </alternativeName>
    <alternativeName>
        <fullName>Myrosinase-binding protein-like At3g16470</fullName>
    </alternativeName>
</protein>
<reference key="1">
    <citation type="journal article" date="2000" name="Nature">
        <title>Sequence and analysis of chromosome 3 of the plant Arabidopsis thaliana.</title>
        <authorList>
            <person name="Salanoubat M."/>
            <person name="Lemcke K."/>
            <person name="Rieger M."/>
            <person name="Ansorge W."/>
            <person name="Unseld M."/>
            <person name="Fartmann B."/>
            <person name="Valle G."/>
            <person name="Bloecker H."/>
            <person name="Perez-Alonso M."/>
            <person name="Obermaier B."/>
            <person name="Delseny M."/>
            <person name="Boutry M."/>
            <person name="Grivell L.A."/>
            <person name="Mache R."/>
            <person name="Puigdomenech P."/>
            <person name="De Simone V."/>
            <person name="Choisne N."/>
            <person name="Artiguenave F."/>
            <person name="Robert C."/>
            <person name="Brottier P."/>
            <person name="Wincker P."/>
            <person name="Cattolico L."/>
            <person name="Weissenbach J."/>
            <person name="Saurin W."/>
            <person name="Quetier F."/>
            <person name="Schaefer M."/>
            <person name="Mueller-Auer S."/>
            <person name="Gabel C."/>
            <person name="Fuchs M."/>
            <person name="Benes V."/>
            <person name="Wurmbach E."/>
            <person name="Drzonek H."/>
            <person name="Erfle H."/>
            <person name="Jordan N."/>
            <person name="Bangert S."/>
            <person name="Wiedelmann R."/>
            <person name="Kranz H."/>
            <person name="Voss H."/>
            <person name="Holland R."/>
            <person name="Brandt P."/>
            <person name="Nyakatura G."/>
            <person name="Vezzi A."/>
            <person name="D'Angelo M."/>
            <person name="Pallavicini A."/>
            <person name="Toppo S."/>
            <person name="Simionati B."/>
            <person name="Conrad A."/>
            <person name="Hornischer K."/>
            <person name="Kauer G."/>
            <person name="Loehnert T.-H."/>
            <person name="Nordsiek G."/>
            <person name="Reichelt J."/>
            <person name="Scharfe M."/>
            <person name="Schoen O."/>
            <person name="Bargues M."/>
            <person name="Terol J."/>
            <person name="Climent J."/>
            <person name="Navarro P."/>
            <person name="Collado C."/>
            <person name="Perez-Perez A."/>
            <person name="Ottenwaelder B."/>
            <person name="Duchemin D."/>
            <person name="Cooke R."/>
            <person name="Laudie M."/>
            <person name="Berger-Llauro C."/>
            <person name="Purnelle B."/>
            <person name="Masuy D."/>
            <person name="de Haan M."/>
            <person name="Maarse A.C."/>
            <person name="Alcaraz J.-P."/>
            <person name="Cottet A."/>
            <person name="Casacuberta E."/>
            <person name="Monfort A."/>
            <person name="Argiriou A."/>
            <person name="Flores M."/>
            <person name="Liguori R."/>
            <person name="Vitale D."/>
            <person name="Mannhaupt G."/>
            <person name="Haase D."/>
            <person name="Schoof H."/>
            <person name="Rudd S."/>
            <person name="Zaccaria P."/>
            <person name="Mewes H.-W."/>
            <person name="Mayer K.F.X."/>
            <person name="Kaul S."/>
            <person name="Town C.D."/>
            <person name="Koo H.L."/>
            <person name="Tallon L.J."/>
            <person name="Jenkins J."/>
            <person name="Rooney T."/>
            <person name="Rizzo M."/>
            <person name="Walts A."/>
            <person name="Utterback T."/>
            <person name="Fujii C.Y."/>
            <person name="Shea T.P."/>
            <person name="Creasy T.H."/>
            <person name="Haas B."/>
            <person name="Maiti R."/>
            <person name="Wu D."/>
            <person name="Peterson J."/>
            <person name="Van Aken S."/>
            <person name="Pai G."/>
            <person name="Militscher J."/>
            <person name="Sellers P."/>
            <person name="Gill J.E."/>
            <person name="Feldblyum T.V."/>
            <person name="Preuss D."/>
            <person name="Lin X."/>
            <person name="Nierman W.C."/>
            <person name="Salzberg S.L."/>
            <person name="White O."/>
            <person name="Venter J.C."/>
            <person name="Fraser C.M."/>
            <person name="Kaneko T."/>
            <person name="Nakamura Y."/>
            <person name="Sato S."/>
            <person name="Kato T."/>
            <person name="Asamizu E."/>
            <person name="Sasamoto S."/>
            <person name="Kimura T."/>
            <person name="Idesawa K."/>
            <person name="Kawashima K."/>
            <person name="Kishida Y."/>
            <person name="Kiyokawa C."/>
            <person name="Kohara M."/>
            <person name="Matsumoto M."/>
            <person name="Matsuno A."/>
            <person name="Muraki A."/>
            <person name="Nakayama S."/>
            <person name="Nakazaki N."/>
            <person name="Shinpo S."/>
            <person name="Takeuchi C."/>
            <person name="Wada T."/>
            <person name="Watanabe A."/>
            <person name="Yamada M."/>
            <person name="Yasuda M."/>
            <person name="Tabata S."/>
        </authorList>
    </citation>
    <scope>NUCLEOTIDE SEQUENCE [LARGE SCALE GENOMIC DNA]</scope>
    <source>
        <strain>cv. Columbia</strain>
    </source>
</reference>
<reference key="2">
    <citation type="journal article" date="2000" name="DNA Res.">
        <title>Structural analysis of Arabidopsis thaliana chromosome 3. II. Sequence features of the 4,251,695 bp regions covered by 90 P1, TAC and BAC clones.</title>
        <authorList>
            <person name="Kaneko T."/>
            <person name="Katoh T."/>
            <person name="Sato S."/>
            <person name="Nakamura Y."/>
            <person name="Asamizu E."/>
            <person name="Tabata S."/>
        </authorList>
    </citation>
    <scope>NUCLEOTIDE SEQUENCE [LARGE SCALE GENOMIC DNA]</scope>
    <source>
        <strain>cv. Columbia</strain>
    </source>
</reference>
<reference key="3">
    <citation type="journal article" date="2017" name="Plant J.">
        <title>Araport11: a complete reannotation of the Arabidopsis thaliana reference genome.</title>
        <authorList>
            <person name="Cheng C.Y."/>
            <person name="Krishnakumar V."/>
            <person name="Chan A.P."/>
            <person name="Thibaud-Nissen F."/>
            <person name="Schobel S."/>
            <person name="Town C.D."/>
        </authorList>
    </citation>
    <scope>GENOME REANNOTATION</scope>
    <source>
        <strain>cv. Columbia</strain>
    </source>
</reference>
<reference key="4">
    <citation type="journal article" date="2003" name="Science">
        <title>Empirical analysis of transcriptional activity in the Arabidopsis genome.</title>
        <authorList>
            <person name="Yamada K."/>
            <person name="Lim J."/>
            <person name="Dale J.M."/>
            <person name="Chen H."/>
            <person name="Shinn P."/>
            <person name="Palm C.J."/>
            <person name="Southwick A.M."/>
            <person name="Wu H.C."/>
            <person name="Kim C.J."/>
            <person name="Nguyen M."/>
            <person name="Pham P.K."/>
            <person name="Cheuk R.F."/>
            <person name="Karlin-Newmann G."/>
            <person name="Liu S.X."/>
            <person name="Lam B."/>
            <person name="Sakano H."/>
            <person name="Wu T."/>
            <person name="Yu G."/>
            <person name="Miranda M."/>
            <person name="Quach H.L."/>
            <person name="Tripp M."/>
            <person name="Chang C.H."/>
            <person name="Lee J.M."/>
            <person name="Toriumi M.J."/>
            <person name="Chan M.M."/>
            <person name="Tang C.C."/>
            <person name="Onodera C.S."/>
            <person name="Deng J.M."/>
            <person name="Akiyama K."/>
            <person name="Ansari Y."/>
            <person name="Arakawa T."/>
            <person name="Banh J."/>
            <person name="Banno F."/>
            <person name="Bowser L."/>
            <person name="Brooks S.Y."/>
            <person name="Carninci P."/>
            <person name="Chao Q."/>
            <person name="Choy N."/>
            <person name="Enju A."/>
            <person name="Goldsmith A.D."/>
            <person name="Gurjal M."/>
            <person name="Hansen N.F."/>
            <person name="Hayashizaki Y."/>
            <person name="Johnson-Hopson C."/>
            <person name="Hsuan V.W."/>
            <person name="Iida K."/>
            <person name="Karnes M."/>
            <person name="Khan S."/>
            <person name="Koesema E."/>
            <person name="Ishida J."/>
            <person name="Jiang P.X."/>
            <person name="Jones T."/>
            <person name="Kawai J."/>
            <person name="Kamiya A."/>
            <person name="Meyers C."/>
            <person name="Nakajima M."/>
            <person name="Narusaka M."/>
            <person name="Seki M."/>
            <person name="Sakurai T."/>
            <person name="Satou M."/>
            <person name="Tamse R."/>
            <person name="Vaysberg M."/>
            <person name="Wallender E.K."/>
            <person name="Wong C."/>
            <person name="Yamamura Y."/>
            <person name="Yuan S."/>
            <person name="Shinozaki K."/>
            <person name="Davis R.W."/>
            <person name="Theologis A."/>
            <person name="Ecker J.R."/>
        </authorList>
    </citation>
    <scope>NUCLEOTIDE SEQUENCE [LARGE SCALE MRNA] (ISOFORM 1)</scope>
    <source>
        <strain>cv. Columbia</strain>
    </source>
</reference>
<reference key="5">
    <citation type="submission" date="2005-03" db="EMBL/GenBank/DDBJ databases">
        <title>Large-scale analysis of RIKEN Arabidopsis full-length (RAFL) cDNAs.</title>
        <authorList>
            <person name="Totoki Y."/>
            <person name="Seki M."/>
            <person name="Ishida J."/>
            <person name="Nakajima M."/>
            <person name="Enju A."/>
            <person name="Kamiya A."/>
            <person name="Narusaka M."/>
            <person name="Shin-i T."/>
            <person name="Nakagawa M."/>
            <person name="Sakamoto N."/>
            <person name="Oishi K."/>
            <person name="Kohara Y."/>
            <person name="Kobayashi M."/>
            <person name="Toyoda A."/>
            <person name="Sakaki Y."/>
            <person name="Sakurai T."/>
            <person name="Iida K."/>
            <person name="Akiyama K."/>
            <person name="Satou M."/>
            <person name="Toyoda T."/>
            <person name="Konagaya A."/>
            <person name="Carninci P."/>
            <person name="Kawai J."/>
            <person name="Hayashizaki Y."/>
            <person name="Shinozaki K."/>
        </authorList>
    </citation>
    <scope>NUCLEOTIDE SEQUENCE [LARGE SCALE MRNA] OF 309-451</scope>
    <source>
        <strain>cv. Columbia</strain>
    </source>
</reference>
<reference key="6">
    <citation type="journal article" date="2008" name="Plant Cell Physiol.">
        <title>Antagonistic jacalin-related lectins regulate the size of ER body-type beta-glucosidase complexes in Arabidopsis thaliana.</title>
        <authorList>
            <person name="Nagano A.J."/>
            <person name="Fukao Y."/>
            <person name="Fujiwara M."/>
            <person name="Nishimura M."/>
            <person name="Hara-Nishimura I."/>
        </authorList>
    </citation>
    <scope>IDENTIFICATION IN THE PYK10 COMPLEX</scope>
    <scope>GENE FAMILY</scope>
    <scope>NOMENCLATURE</scope>
</reference>
<gene>
    <name type="primary">JAL35</name>
    <name type="synonym">JR1</name>
    <name type="ordered locus">At3g16470</name>
    <name type="ORF">MDC8.10</name>
    <name type="ORF">T02O04.3</name>
</gene>
<accession>O04309</accession>
<accession>F4J2P0</accession>
<accession>Q56Z22</accession>
<comment type="subunit">
    <text evidence="3">Component of the PYK10 complex, at least composed of PYK10/BGLU23, BGLU21, BGLU22, JAL22, JAL23, PBP1/JAL30, PBP2/JAL31, JAL32, JAL33, JAL34, JAL35, GLL22 and GLL23.</text>
</comment>
<comment type="alternative products">
    <event type="alternative splicing"/>
    <isoform>
        <id>O04309-1</id>
        <name>1</name>
        <sequence type="displayed"/>
    </isoform>
    <isoform>
        <id>O04309-2</id>
        <name>2</name>
        <sequence type="described" ref="VSP_056720"/>
    </isoform>
</comment>
<comment type="similarity">
    <text evidence="2 4">Belongs to the jacalin lectin family.</text>
</comment>
<organism>
    <name type="scientific">Arabidopsis thaliana</name>
    <name type="common">Mouse-ear cress</name>
    <dbReference type="NCBI Taxonomy" id="3702"/>
    <lineage>
        <taxon>Eukaryota</taxon>
        <taxon>Viridiplantae</taxon>
        <taxon>Streptophyta</taxon>
        <taxon>Embryophyta</taxon>
        <taxon>Tracheophyta</taxon>
        <taxon>Spermatophyta</taxon>
        <taxon>Magnoliopsida</taxon>
        <taxon>eudicotyledons</taxon>
        <taxon>Gunneridae</taxon>
        <taxon>Pentapetalae</taxon>
        <taxon>rosids</taxon>
        <taxon>malvids</taxon>
        <taxon>Brassicales</taxon>
        <taxon>Brassicaceae</taxon>
        <taxon>Camelineae</taxon>
        <taxon>Arabidopsis</taxon>
    </lineage>
</organism>
<keyword id="KW-0007">Acetylation</keyword>
<keyword id="KW-0025">Alternative splicing</keyword>
<keyword id="KW-0430">Lectin</keyword>
<keyword id="KW-1185">Reference proteome</keyword>
<keyword id="KW-0677">Repeat</keyword>
<sequence length="451" mass="48497">MAKKLEAQGGRGGEEWDDGGAYENVKKVYVGQGDSGVVYVKFDYEKDGKIVSHEHGKQTLLGTEEFVVDPEDYITSVKIYYEKLFGSPIEIVTALIFKTFKGKTSQPFGLTSGEEAELGGGKIVGFHGSSSDLIHSVGVYIIPSTTPLTPPVSGGLTKLEAQGGRGGDVWDDGGAYDNVKKVYVGQGDSGVVYVKFDYEKDGKIVSLEHGKQTLLGTEEFEIDPEDYITYVKVYYEKLFGSPIEIVTALIFKTFKGKTSQPFGLTSGEEAELGGGKIVGFHGTSSDLIHSLGAYIIPSSTPLTPSSNTIPAQGGDGGVAWDDGVHDSVKKIYVGQGDSCVTYFKADYEKASKPVLGSDHGKKTLLGAEEFVLGPDEYVTAVSGYYDKIFSVDAPAIVSLKFKTNKRTSIPYGLEGGTEFVLEKKDHKIVGFYGQAGEYLYKLGVNVAPIAK</sequence>
<feature type="initiator methionine" description="Removed" evidence="1">
    <location>
        <position position="1"/>
    </location>
</feature>
<feature type="chain" id="PRO_0000072795" description="Jacalin-related lectin 35">
    <location>
        <begin position="2"/>
        <end position="451"/>
    </location>
</feature>
<feature type="domain" description="Jacalin-type lectin 1" evidence="2">
    <location>
        <begin position="2"/>
        <end position="143"/>
    </location>
</feature>
<feature type="domain" description="Jacalin-type lectin 2" evidence="2">
    <location>
        <begin position="156"/>
        <end position="297"/>
    </location>
</feature>
<feature type="domain" description="Jacalin-type lectin 3" evidence="2">
    <location>
        <begin position="306"/>
        <end position="448"/>
    </location>
</feature>
<feature type="modified residue" description="N-acetylalanine" evidence="1">
    <location>
        <position position="2"/>
    </location>
</feature>
<feature type="splice variant" id="VSP_056720" description="In isoform 2." evidence="4">
    <location>
        <begin position="54"/>
        <end position="207"/>
    </location>
</feature>
<proteinExistence type="evidence at protein level"/>
<name>JAL35_ARATH</name>
<evidence type="ECO:0000250" key="1">
    <source>
        <dbReference type="UniProtKB" id="Q9FGC5"/>
    </source>
</evidence>
<evidence type="ECO:0000255" key="2">
    <source>
        <dbReference type="PROSITE-ProRule" id="PRU01088"/>
    </source>
</evidence>
<evidence type="ECO:0000269" key="3">
    <source>
    </source>
</evidence>
<evidence type="ECO:0000305" key="4"/>